<keyword id="KW-1185">Reference proteome</keyword>
<keyword id="KW-0677">Repeat</keyword>
<sequence length="586" mass="64973">MTLLNKSIRYYVDFDQWGINAFNSNPIETTKGFNEALIYASENNFPIVEVPKGNFIIDSVNTLNQRNPEIGGGIKIPSNMELLLDPEAVFQVNPNGYQGYSCFYIGLAENVIIRGGRIIGDRYQHDYSLIDTDRKTHEWGFGIHVHGSKNVLIENVQISDCIGDNIWIAAHGMMNYPGMVYTPSKSVTVRKCELKRGRRNNLATNGCEGLLVEDCDIEEAGGDTIGPQLGIDLEGYGENGRKYDHPYELTISDCRFRKNGRGSVTAHTSGKVSIKDNYCDNVISYGYSTDVSIKGNKIINEGGSKEYGIDSVGVSSTETGNRIQITDNNIQGFKIGMMIRGKGVSIDNNTVKNASNCAIATHMAEDVSISNNRIQDSDCIQIQVRNSSDIKVSNNKGKGTTSAYAIKVMDSNDVKFLNNTFSNLYGGLYCERSQAVRIKLNDFLLSGKGYGIYWDKDSEVFLTRNEIFEPRNVAIMGAADMYNIRISDNQIYNCKAIIAIHLIGGSEHMVRGNEIMFNRDSDQGYGIYLNGTKKVRLIRNDVQGIGARVLSHPFATFNASSTTLIHNTYDSGTPRLALDDTVIDYK</sequence>
<organism>
    <name type="scientific">Bacillus subtilis (strain 168)</name>
    <dbReference type="NCBI Taxonomy" id="224308"/>
    <lineage>
        <taxon>Bacteria</taxon>
        <taxon>Bacillati</taxon>
        <taxon>Bacillota</taxon>
        <taxon>Bacilli</taxon>
        <taxon>Bacillales</taxon>
        <taxon>Bacillaceae</taxon>
        <taxon>Bacillus</taxon>
    </lineage>
</organism>
<dbReference type="EMBL" id="AL009126">
    <property type="protein sequence ID" value="CAB13937.1"/>
    <property type="molecule type" value="Genomic_DNA"/>
</dbReference>
<dbReference type="RefSeq" id="NP_389927.1">
    <property type="nucleotide sequence ID" value="NC_000964.3"/>
</dbReference>
<dbReference type="RefSeq" id="WP_009967482.1">
    <property type="nucleotide sequence ID" value="NZ_OZ025638.1"/>
</dbReference>
<dbReference type="SMR" id="O31912"/>
<dbReference type="FunCoup" id="O31912">
    <property type="interactions" value="9"/>
</dbReference>
<dbReference type="STRING" id="224308.BSU20450"/>
<dbReference type="PaxDb" id="224308-BSU20450"/>
<dbReference type="EnsemblBacteria" id="CAB13937">
    <property type="protein sequence ID" value="CAB13937"/>
    <property type="gene ID" value="BSU_20450"/>
</dbReference>
<dbReference type="GeneID" id="940009"/>
<dbReference type="KEGG" id="bsu:BSU20450"/>
<dbReference type="PATRIC" id="fig|224308.179.peg.2235"/>
<dbReference type="eggNOG" id="COG3420">
    <property type="taxonomic scope" value="Bacteria"/>
</dbReference>
<dbReference type="eggNOG" id="COG5434">
    <property type="taxonomic scope" value="Bacteria"/>
</dbReference>
<dbReference type="InParanoid" id="O31912"/>
<dbReference type="OrthoDB" id="2488735at2"/>
<dbReference type="BioCyc" id="BSUB:BSU20450-MONOMER"/>
<dbReference type="Proteomes" id="UP000001570">
    <property type="component" value="Chromosome"/>
</dbReference>
<dbReference type="Gene3D" id="2.160.20.10">
    <property type="entry name" value="Single-stranded right-handed beta-helix, Pectin lyase-like"/>
    <property type="match status" value="2"/>
</dbReference>
<dbReference type="InterPro" id="IPR039448">
    <property type="entry name" value="Beta_helix"/>
</dbReference>
<dbReference type="InterPro" id="IPR006626">
    <property type="entry name" value="PbH1"/>
</dbReference>
<dbReference type="InterPro" id="IPR012334">
    <property type="entry name" value="Pectin_lyas_fold"/>
</dbReference>
<dbReference type="InterPro" id="IPR011050">
    <property type="entry name" value="Pectin_lyase_fold/virulence"/>
</dbReference>
<dbReference type="InterPro" id="IPR051550">
    <property type="entry name" value="SCF-Subunits/Alg-Epimerases"/>
</dbReference>
<dbReference type="PANTHER" id="PTHR22990">
    <property type="entry name" value="F-BOX ONLY PROTEIN"/>
    <property type="match status" value="1"/>
</dbReference>
<dbReference type="PANTHER" id="PTHR22990:SF15">
    <property type="entry name" value="F-BOX ONLY PROTEIN 10"/>
    <property type="match status" value="1"/>
</dbReference>
<dbReference type="Pfam" id="PF13229">
    <property type="entry name" value="Beta_helix"/>
    <property type="match status" value="2"/>
</dbReference>
<dbReference type="SMART" id="SM00710">
    <property type="entry name" value="PbH1"/>
    <property type="match status" value="13"/>
</dbReference>
<dbReference type="SUPFAM" id="SSF51126">
    <property type="entry name" value="Pectin lyase-like"/>
    <property type="match status" value="2"/>
</dbReference>
<name>YORA_BACSU</name>
<accession>O31912</accession>
<reference key="1">
    <citation type="journal article" date="1997" name="Nature">
        <title>The complete genome sequence of the Gram-positive bacterium Bacillus subtilis.</title>
        <authorList>
            <person name="Kunst F."/>
            <person name="Ogasawara N."/>
            <person name="Moszer I."/>
            <person name="Albertini A.M."/>
            <person name="Alloni G."/>
            <person name="Azevedo V."/>
            <person name="Bertero M.G."/>
            <person name="Bessieres P."/>
            <person name="Bolotin A."/>
            <person name="Borchert S."/>
            <person name="Borriss R."/>
            <person name="Boursier L."/>
            <person name="Brans A."/>
            <person name="Braun M."/>
            <person name="Brignell S.C."/>
            <person name="Bron S."/>
            <person name="Brouillet S."/>
            <person name="Bruschi C.V."/>
            <person name="Caldwell B."/>
            <person name="Capuano V."/>
            <person name="Carter N.M."/>
            <person name="Choi S.-K."/>
            <person name="Codani J.-J."/>
            <person name="Connerton I.F."/>
            <person name="Cummings N.J."/>
            <person name="Daniel R.A."/>
            <person name="Denizot F."/>
            <person name="Devine K.M."/>
            <person name="Duesterhoeft A."/>
            <person name="Ehrlich S.D."/>
            <person name="Emmerson P.T."/>
            <person name="Entian K.-D."/>
            <person name="Errington J."/>
            <person name="Fabret C."/>
            <person name="Ferrari E."/>
            <person name="Foulger D."/>
            <person name="Fritz C."/>
            <person name="Fujita M."/>
            <person name="Fujita Y."/>
            <person name="Fuma S."/>
            <person name="Galizzi A."/>
            <person name="Galleron N."/>
            <person name="Ghim S.-Y."/>
            <person name="Glaser P."/>
            <person name="Goffeau A."/>
            <person name="Golightly E.J."/>
            <person name="Grandi G."/>
            <person name="Guiseppi G."/>
            <person name="Guy B.J."/>
            <person name="Haga K."/>
            <person name="Haiech J."/>
            <person name="Harwood C.R."/>
            <person name="Henaut A."/>
            <person name="Hilbert H."/>
            <person name="Holsappel S."/>
            <person name="Hosono S."/>
            <person name="Hullo M.-F."/>
            <person name="Itaya M."/>
            <person name="Jones L.-M."/>
            <person name="Joris B."/>
            <person name="Karamata D."/>
            <person name="Kasahara Y."/>
            <person name="Klaerr-Blanchard M."/>
            <person name="Klein C."/>
            <person name="Kobayashi Y."/>
            <person name="Koetter P."/>
            <person name="Koningstein G."/>
            <person name="Krogh S."/>
            <person name="Kumano M."/>
            <person name="Kurita K."/>
            <person name="Lapidus A."/>
            <person name="Lardinois S."/>
            <person name="Lauber J."/>
            <person name="Lazarevic V."/>
            <person name="Lee S.-M."/>
            <person name="Levine A."/>
            <person name="Liu H."/>
            <person name="Masuda S."/>
            <person name="Mauel C."/>
            <person name="Medigue C."/>
            <person name="Medina N."/>
            <person name="Mellado R.P."/>
            <person name="Mizuno M."/>
            <person name="Moestl D."/>
            <person name="Nakai S."/>
            <person name="Noback M."/>
            <person name="Noone D."/>
            <person name="O'Reilly M."/>
            <person name="Ogawa K."/>
            <person name="Ogiwara A."/>
            <person name="Oudega B."/>
            <person name="Park S.-H."/>
            <person name="Parro V."/>
            <person name="Pohl T.M."/>
            <person name="Portetelle D."/>
            <person name="Porwollik S."/>
            <person name="Prescott A.M."/>
            <person name="Presecan E."/>
            <person name="Pujic P."/>
            <person name="Purnelle B."/>
            <person name="Rapoport G."/>
            <person name="Rey M."/>
            <person name="Reynolds S."/>
            <person name="Rieger M."/>
            <person name="Rivolta C."/>
            <person name="Rocha E."/>
            <person name="Roche B."/>
            <person name="Rose M."/>
            <person name="Sadaie Y."/>
            <person name="Sato T."/>
            <person name="Scanlan E."/>
            <person name="Schleich S."/>
            <person name="Schroeter R."/>
            <person name="Scoffone F."/>
            <person name="Sekiguchi J."/>
            <person name="Sekowska A."/>
            <person name="Seror S.J."/>
            <person name="Serror P."/>
            <person name="Shin B.-S."/>
            <person name="Soldo B."/>
            <person name="Sorokin A."/>
            <person name="Tacconi E."/>
            <person name="Takagi T."/>
            <person name="Takahashi H."/>
            <person name="Takemaru K."/>
            <person name="Takeuchi M."/>
            <person name="Tamakoshi A."/>
            <person name="Tanaka T."/>
            <person name="Terpstra P."/>
            <person name="Tognoni A."/>
            <person name="Tosato V."/>
            <person name="Uchiyama S."/>
            <person name="Vandenbol M."/>
            <person name="Vannier F."/>
            <person name="Vassarotti A."/>
            <person name="Viari A."/>
            <person name="Wambutt R."/>
            <person name="Wedler E."/>
            <person name="Wedler H."/>
            <person name="Weitzenegger T."/>
            <person name="Winters P."/>
            <person name="Wipat A."/>
            <person name="Yamamoto H."/>
            <person name="Yamane K."/>
            <person name="Yasumoto K."/>
            <person name="Yata K."/>
            <person name="Yoshida K."/>
            <person name="Yoshikawa H.-F."/>
            <person name="Zumstein E."/>
            <person name="Yoshikawa H."/>
            <person name="Danchin A."/>
        </authorList>
    </citation>
    <scope>NUCLEOTIDE SEQUENCE [LARGE SCALE GENOMIC DNA]</scope>
    <source>
        <strain>168</strain>
    </source>
</reference>
<protein>
    <recommendedName>
        <fullName>SPbeta prophage-derived uncharacterized protein YorA</fullName>
    </recommendedName>
</protein>
<proteinExistence type="predicted"/>
<gene>
    <name type="primary">yorA</name>
    <name type="ordered locus">BSU20450</name>
</gene>
<feature type="chain" id="PRO_0000359909" description="SPbeta prophage-derived uncharacterized protein YorA">
    <location>
        <begin position="1"/>
        <end position="586"/>
    </location>
</feature>
<feature type="repeat" description="PbH1 1">
    <location>
        <begin position="108"/>
        <end position="147"/>
    </location>
</feature>
<feature type="repeat" description="PbH1 2">
    <location>
        <begin position="148"/>
        <end position="170"/>
    </location>
</feature>
<feature type="repeat" description="PbH1 3">
    <location>
        <begin position="184"/>
        <end position="206"/>
    </location>
</feature>
<feature type="repeat" description="PbH1 4">
    <location>
        <begin position="207"/>
        <end position="235"/>
    </location>
</feature>
<feature type="repeat" description="PbH1 5">
    <location>
        <begin position="246"/>
        <end position="268"/>
    </location>
</feature>
<feature type="repeat" description="PbH1 6">
    <location>
        <begin position="288"/>
        <end position="313"/>
    </location>
</feature>
<feature type="repeat" description="PbH1 7">
    <location>
        <begin position="320"/>
        <end position="341"/>
    </location>
</feature>
<feature type="repeat" description="PbH1 8">
    <location>
        <begin position="364"/>
        <end position="384"/>
    </location>
</feature>
<feature type="repeat" description="PbH1 9">
    <location>
        <begin position="387"/>
        <end position="410"/>
    </location>
</feature>
<feature type="repeat" description="PbH1 10">
    <location>
        <begin position="411"/>
        <end position="432"/>
    </location>
</feature>
<feature type="repeat" description="PbH1 11">
    <location>
        <begin position="435"/>
        <end position="456"/>
    </location>
</feature>
<feature type="repeat" description="PbH1 12">
    <location>
        <begin position="481"/>
        <end position="504"/>
    </location>
</feature>
<feature type="repeat" description="PbH1 13">
    <location>
        <begin position="505"/>
        <end position="531"/>
    </location>
</feature>